<reference key="1">
    <citation type="journal article" date="2005" name="Nature">
        <title>Virology: independent virus development outside a host.</title>
        <authorList>
            <person name="Haring M."/>
            <person name="Vestergaard G."/>
            <person name="Rachel R."/>
            <person name="Chen L."/>
            <person name="Garrett R.A."/>
            <person name="Prangishvili D."/>
        </authorList>
    </citation>
    <scope>NUCLEOTIDE SEQUENCE [GENOMIC DNA]</scope>
</reference>
<name>Y175_ATV</name>
<accession>Q3V4W5</accession>
<organism>
    <name type="scientific">Acidianus two-tailed virus</name>
    <name type="common">ATV</name>
    <dbReference type="NCBI Taxonomy" id="315953"/>
    <lineage>
        <taxon>Viruses</taxon>
        <taxon>Viruses incertae sedis</taxon>
        <taxon>Bicaudaviridae</taxon>
        <taxon>Bicaudavirus</taxon>
    </lineage>
</organism>
<protein>
    <recommendedName>
        <fullName>Putative transmembrane protein ORF175</fullName>
    </recommendedName>
</protein>
<organismHost>
    <name type="scientific">Acidianus convivator</name>
    <dbReference type="NCBI Taxonomy" id="269667"/>
</organismHost>
<evidence type="ECO:0000255" key="1"/>
<evidence type="ECO:0000305" key="2"/>
<feature type="chain" id="PRO_0000389042" description="Putative transmembrane protein ORF175">
    <location>
        <begin position="1"/>
        <end position="175"/>
    </location>
</feature>
<feature type="transmembrane region" description="Helical" evidence="1">
    <location>
        <begin position="14"/>
        <end position="34"/>
    </location>
</feature>
<feature type="transmembrane region" description="Helical" evidence="1">
    <location>
        <begin position="58"/>
        <end position="78"/>
    </location>
</feature>
<feature type="transmembrane region" description="Helical" evidence="1">
    <location>
        <begin position="101"/>
        <end position="121"/>
    </location>
</feature>
<feature type="transmembrane region" description="Helical" evidence="1">
    <location>
        <begin position="142"/>
        <end position="162"/>
    </location>
</feature>
<comment type="subcellular location">
    <subcellularLocation>
        <location evidence="2">Host membrane</location>
        <topology evidence="2">Multi-pass membrane protein</topology>
    </subcellularLocation>
</comment>
<keyword id="KW-1043">Host membrane</keyword>
<keyword id="KW-0472">Membrane</keyword>
<keyword id="KW-1185">Reference proteome</keyword>
<keyword id="KW-0812">Transmembrane</keyword>
<keyword id="KW-1133">Transmembrane helix</keyword>
<sequence>MLQTWAKLAYEANLGIVYGSTLIILLLPLIGSFMPPNLVSSISKLNAFTLLESYLLPVLSNFGIFGGLALGVGSAIAFSVLNSIASSFLNLSFNQQQALTIVVALLVSQFIFGGWATFALFLTSMLGSVPPVPGLAVIMSFITPFIDGLIATLGGLMVVLSILYELSEIGLVTLP</sequence>
<dbReference type="EMBL" id="AJ888457">
    <property type="protein sequence ID" value="CAI59849.1"/>
    <property type="molecule type" value="Genomic_DNA"/>
</dbReference>
<dbReference type="RefSeq" id="YP_319847.1">
    <property type="nucleotide sequence ID" value="NC_007409.1"/>
</dbReference>
<dbReference type="GeneID" id="4484224"/>
<dbReference type="KEGG" id="vg:4484224"/>
<dbReference type="Proteomes" id="UP000002150">
    <property type="component" value="Genome"/>
</dbReference>
<dbReference type="GO" id="GO:0033644">
    <property type="term" value="C:host cell membrane"/>
    <property type="evidence" value="ECO:0007669"/>
    <property type="project" value="UniProtKB-SubCell"/>
</dbReference>
<dbReference type="GO" id="GO:0016020">
    <property type="term" value="C:membrane"/>
    <property type="evidence" value="ECO:0007669"/>
    <property type="project" value="UniProtKB-KW"/>
</dbReference>
<proteinExistence type="predicted"/>